<proteinExistence type="inferred from homology"/>
<evidence type="ECO:0000255" key="1">
    <source>
        <dbReference type="HAMAP-Rule" id="MF_01901"/>
    </source>
</evidence>
<evidence type="ECO:0000305" key="2"/>
<gene>
    <name evidence="1" type="primary">argO</name>
    <name type="ordered locus">STY3222</name>
    <name type="ordered locus">t2984</name>
</gene>
<keyword id="KW-0029">Amino-acid transport</keyword>
<keyword id="KW-0997">Cell inner membrane</keyword>
<keyword id="KW-1003">Cell membrane</keyword>
<keyword id="KW-0472">Membrane</keyword>
<keyword id="KW-0812">Transmembrane</keyword>
<keyword id="KW-1133">Transmembrane helix</keyword>
<keyword id="KW-0813">Transport</keyword>
<protein>
    <recommendedName>
        <fullName evidence="1">Arginine exporter protein ArgO</fullName>
    </recommendedName>
</protein>
<reference key="1">
    <citation type="journal article" date="2001" name="Nature">
        <title>Complete genome sequence of a multiple drug resistant Salmonella enterica serovar Typhi CT18.</title>
        <authorList>
            <person name="Parkhill J."/>
            <person name="Dougan G."/>
            <person name="James K.D."/>
            <person name="Thomson N.R."/>
            <person name="Pickard D."/>
            <person name="Wain J."/>
            <person name="Churcher C.M."/>
            <person name="Mungall K.L."/>
            <person name="Bentley S.D."/>
            <person name="Holden M.T.G."/>
            <person name="Sebaihia M."/>
            <person name="Baker S."/>
            <person name="Basham D."/>
            <person name="Brooks K."/>
            <person name="Chillingworth T."/>
            <person name="Connerton P."/>
            <person name="Cronin A."/>
            <person name="Davis P."/>
            <person name="Davies R.M."/>
            <person name="Dowd L."/>
            <person name="White N."/>
            <person name="Farrar J."/>
            <person name="Feltwell T."/>
            <person name="Hamlin N."/>
            <person name="Haque A."/>
            <person name="Hien T.T."/>
            <person name="Holroyd S."/>
            <person name="Jagels K."/>
            <person name="Krogh A."/>
            <person name="Larsen T.S."/>
            <person name="Leather S."/>
            <person name="Moule S."/>
            <person name="O'Gaora P."/>
            <person name="Parry C."/>
            <person name="Quail M.A."/>
            <person name="Rutherford K.M."/>
            <person name="Simmonds M."/>
            <person name="Skelton J."/>
            <person name="Stevens K."/>
            <person name="Whitehead S."/>
            <person name="Barrell B.G."/>
        </authorList>
    </citation>
    <scope>NUCLEOTIDE SEQUENCE [LARGE SCALE GENOMIC DNA]</scope>
    <source>
        <strain>CT18</strain>
    </source>
</reference>
<reference key="2">
    <citation type="journal article" date="2003" name="J. Bacteriol.">
        <title>Comparative genomics of Salmonella enterica serovar Typhi strains Ty2 and CT18.</title>
        <authorList>
            <person name="Deng W."/>
            <person name="Liou S.-R."/>
            <person name="Plunkett G. III"/>
            <person name="Mayhew G.F."/>
            <person name="Rose D.J."/>
            <person name="Burland V."/>
            <person name="Kodoyianni V."/>
            <person name="Schwartz D.C."/>
            <person name="Blattner F.R."/>
        </authorList>
    </citation>
    <scope>NUCLEOTIDE SEQUENCE [LARGE SCALE GENOMIC DNA]</scope>
    <source>
        <strain>ATCC 700931 / Ty2</strain>
    </source>
</reference>
<accession>Q8Z3W2</accession>
<accession>Q7C7C3</accession>
<comment type="function">
    <text evidence="1">Involved in the export of arginine. Important to control the intracellular level of arginine and the correct balance between arginine and lysine.</text>
</comment>
<comment type="catalytic activity">
    <reaction evidence="1">
        <text>L-arginine(in) = L-arginine(out)</text>
        <dbReference type="Rhea" id="RHEA:32143"/>
        <dbReference type="ChEBI" id="CHEBI:32682"/>
    </reaction>
    <physiologicalReaction direction="left-to-right" evidence="1">
        <dbReference type="Rhea" id="RHEA:32144"/>
    </physiologicalReaction>
</comment>
<comment type="subcellular location">
    <subcellularLocation>
        <location evidence="1">Cell inner membrane</location>
        <topology evidence="1">Multi-pass membrane protein</topology>
    </subcellularLocation>
</comment>
<comment type="similarity">
    <text evidence="1 2">Belongs to the LysE/ArgO transporter (TC 2.A.75) family.</text>
</comment>
<organism>
    <name type="scientific">Salmonella typhi</name>
    <dbReference type="NCBI Taxonomy" id="90370"/>
    <lineage>
        <taxon>Bacteria</taxon>
        <taxon>Pseudomonadati</taxon>
        <taxon>Pseudomonadota</taxon>
        <taxon>Gammaproteobacteria</taxon>
        <taxon>Enterobacterales</taxon>
        <taxon>Enterobacteriaceae</taxon>
        <taxon>Salmonella</taxon>
    </lineage>
</organism>
<dbReference type="EMBL" id="AL513382">
    <property type="protein sequence ID" value="CAD02896.1"/>
    <property type="molecule type" value="Genomic_DNA"/>
</dbReference>
<dbReference type="EMBL" id="AE014613">
    <property type="protein sequence ID" value="AAO70536.1"/>
    <property type="molecule type" value="Genomic_DNA"/>
</dbReference>
<dbReference type="RefSeq" id="NP_457464.1">
    <property type="nucleotide sequence ID" value="NC_003198.1"/>
</dbReference>
<dbReference type="RefSeq" id="WP_000626880.1">
    <property type="nucleotide sequence ID" value="NZ_WSUR01000024.1"/>
</dbReference>
<dbReference type="STRING" id="220341.gene:17587098"/>
<dbReference type="KEGG" id="stt:t2984"/>
<dbReference type="KEGG" id="sty:STY3222"/>
<dbReference type="PATRIC" id="fig|220341.7.peg.3284"/>
<dbReference type="eggNOG" id="COG1279">
    <property type="taxonomic scope" value="Bacteria"/>
</dbReference>
<dbReference type="HOGENOM" id="CLU_087840_0_1_6"/>
<dbReference type="OMA" id="HVFAVCL"/>
<dbReference type="OrthoDB" id="5638726at2"/>
<dbReference type="Proteomes" id="UP000000541">
    <property type="component" value="Chromosome"/>
</dbReference>
<dbReference type="Proteomes" id="UP000002670">
    <property type="component" value="Chromosome"/>
</dbReference>
<dbReference type="GO" id="GO:0005886">
    <property type="term" value="C:plasma membrane"/>
    <property type="evidence" value="ECO:0007669"/>
    <property type="project" value="UniProtKB-SubCell"/>
</dbReference>
<dbReference type="GO" id="GO:0061459">
    <property type="term" value="F:L-arginine transmembrane transporter activity"/>
    <property type="evidence" value="ECO:0007669"/>
    <property type="project" value="UniProtKB-UniRule"/>
</dbReference>
<dbReference type="HAMAP" id="MF_01901">
    <property type="entry name" value="ArgO"/>
    <property type="match status" value="1"/>
</dbReference>
<dbReference type="InterPro" id="IPR023445">
    <property type="entry name" value="Arg_export_ArgO_enterobac"/>
</dbReference>
<dbReference type="InterPro" id="IPR001123">
    <property type="entry name" value="LeuE-type"/>
</dbReference>
<dbReference type="InterPro" id="IPR004777">
    <property type="entry name" value="Lys/arg_exporter"/>
</dbReference>
<dbReference type="NCBIfam" id="TIGR00948">
    <property type="entry name" value="2a75"/>
    <property type="match status" value="1"/>
</dbReference>
<dbReference type="NCBIfam" id="NF006801">
    <property type="entry name" value="PRK09304.1"/>
    <property type="match status" value="1"/>
</dbReference>
<dbReference type="PANTHER" id="PTHR30086">
    <property type="entry name" value="ARGININE EXPORTER PROTEIN ARGO"/>
    <property type="match status" value="1"/>
</dbReference>
<dbReference type="PANTHER" id="PTHR30086:SF20">
    <property type="entry name" value="ARGININE EXPORTER PROTEIN ARGO-RELATED"/>
    <property type="match status" value="1"/>
</dbReference>
<dbReference type="Pfam" id="PF01810">
    <property type="entry name" value="LysE"/>
    <property type="match status" value="1"/>
</dbReference>
<sequence length="211" mass="23172">MISYYFQGVALGAAMILPLGPQNAFVMNQGIRRQYHLMIALLCALSDLVLISAGIFGGSALLMQSPWLLALVTWGGVAFLLWYGFGALKTAMSSNLELASAEVMKQGRWKIIATMLAVTWLNPHVYLDTFVVLGSLGGQLAMEPKRWFALGTISASFLWFFGLALLAAWLAPRLRTAKAQRIINILVGVVMWLIAFQLAREGVAHMHALFN</sequence>
<feature type="chain" id="PRO_0000204165" description="Arginine exporter protein ArgO">
    <location>
        <begin position="1"/>
        <end position="211"/>
    </location>
</feature>
<feature type="transmembrane region" description="Helical" evidence="1">
    <location>
        <begin position="1"/>
        <end position="21"/>
    </location>
</feature>
<feature type="transmembrane region" description="Helical" evidence="1">
    <location>
        <begin position="37"/>
        <end position="57"/>
    </location>
</feature>
<feature type="transmembrane region" description="Helical" evidence="1">
    <location>
        <begin position="68"/>
        <end position="88"/>
    </location>
</feature>
<feature type="transmembrane region" description="Helical" evidence="1">
    <location>
        <begin position="111"/>
        <end position="131"/>
    </location>
</feature>
<feature type="transmembrane region" description="Helical" evidence="1">
    <location>
        <begin position="147"/>
        <end position="167"/>
    </location>
</feature>
<feature type="transmembrane region" description="Helical" evidence="1">
    <location>
        <begin position="179"/>
        <end position="199"/>
    </location>
</feature>
<name>ARGO_SALTI</name>